<reference key="1">
    <citation type="journal article" date="2002" name="Nat. Genet.">
        <title>Genome sequence of the endocellular obligate symbiont of tsetse flies, Wigglesworthia glossinidia.</title>
        <authorList>
            <person name="Akman L."/>
            <person name="Yamashita A."/>
            <person name="Watanabe H."/>
            <person name="Oshima K."/>
            <person name="Shiba T."/>
            <person name="Hattori M."/>
            <person name="Aksoy S."/>
        </authorList>
    </citation>
    <scope>NUCLEOTIDE SEQUENCE [LARGE SCALE GENOMIC DNA]</scope>
</reference>
<feature type="chain" id="PRO_0000158886" description="Adenylate kinase">
    <location>
        <begin position="1"/>
        <end position="210"/>
    </location>
</feature>
<feature type="region of interest" description="NMP" evidence="1">
    <location>
        <begin position="30"/>
        <end position="54"/>
    </location>
</feature>
<feature type="region of interest" description="LID">
    <location>
        <begin position="117"/>
        <end position="154"/>
    </location>
</feature>
<feature type="binding site" evidence="1">
    <location>
        <begin position="10"/>
        <end position="15"/>
    </location>
    <ligand>
        <name>ATP</name>
        <dbReference type="ChEBI" id="CHEBI:30616"/>
    </ligand>
</feature>
<feature type="binding site" evidence="1">
    <location>
        <position position="36"/>
    </location>
    <ligand>
        <name>AMP</name>
        <dbReference type="ChEBI" id="CHEBI:456215"/>
    </ligand>
</feature>
<feature type="binding site" evidence="1">
    <location>
        <begin position="52"/>
        <end position="54"/>
    </location>
    <ligand>
        <name>AMP</name>
        <dbReference type="ChEBI" id="CHEBI:456215"/>
    </ligand>
</feature>
<feature type="binding site" evidence="1">
    <location>
        <begin position="80"/>
        <end position="83"/>
    </location>
    <ligand>
        <name>AMP</name>
        <dbReference type="ChEBI" id="CHEBI:456215"/>
    </ligand>
</feature>
<feature type="binding site" evidence="1">
    <location>
        <position position="87"/>
    </location>
    <ligand>
        <name>AMP</name>
        <dbReference type="ChEBI" id="CHEBI:456215"/>
    </ligand>
</feature>
<feature type="binding site" evidence="1">
    <location>
        <position position="118"/>
    </location>
    <ligand>
        <name>ATP</name>
        <dbReference type="ChEBI" id="CHEBI:30616"/>
    </ligand>
</feature>
<feature type="binding site" evidence="1">
    <location>
        <begin position="127"/>
        <end position="128"/>
    </location>
    <ligand>
        <name>ATP</name>
        <dbReference type="ChEBI" id="CHEBI:30616"/>
    </ligand>
</feature>
<feature type="binding site" evidence="1">
    <location>
        <position position="151"/>
    </location>
    <ligand>
        <name>AMP</name>
        <dbReference type="ChEBI" id="CHEBI:456215"/>
    </ligand>
</feature>
<feature type="binding site" evidence="1">
    <location>
        <position position="162"/>
    </location>
    <ligand>
        <name>AMP</name>
        <dbReference type="ChEBI" id="CHEBI:456215"/>
    </ligand>
</feature>
<feature type="binding site" evidence="1">
    <location>
        <position position="195"/>
    </location>
    <ligand>
        <name>ATP</name>
        <dbReference type="ChEBI" id="CHEBI:30616"/>
    </ligand>
</feature>
<accession>Q8D227</accession>
<proteinExistence type="inferred from homology"/>
<name>KAD_WIGBR</name>
<organism>
    <name type="scientific">Wigglesworthia glossinidia brevipalpis</name>
    <dbReference type="NCBI Taxonomy" id="36870"/>
    <lineage>
        <taxon>Bacteria</taxon>
        <taxon>Pseudomonadati</taxon>
        <taxon>Pseudomonadota</taxon>
        <taxon>Gammaproteobacteria</taxon>
        <taxon>Enterobacterales</taxon>
        <taxon>Erwiniaceae</taxon>
        <taxon>Wigglesworthia</taxon>
    </lineage>
</organism>
<dbReference type="EC" id="2.7.4.3" evidence="1"/>
<dbReference type="EMBL" id="BA000021">
    <property type="protein sequence ID" value="BAC24674.1"/>
    <property type="molecule type" value="Genomic_DNA"/>
</dbReference>
<dbReference type="SMR" id="Q8D227"/>
<dbReference type="STRING" id="36870.gene:10369036"/>
<dbReference type="KEGG" id="wbr:adk"/>
<dbReference type="eggNOG" id="COG0563">
    <property type="taxonomic scope" value="Bacteria"/>
</dbReference>
<dbReference type="HOGENOM" id="CLU_032354_1_2_6"/>
<dbReference type="OrthoDB" id="9805030at2"/>
<dbReference type="UniPathway" id="UPA00588">
    <property type="reaction ID" value="UER00649"/>
</dbReference>
<dbReference type="Proteomes" id="UP000000562">
    <property type="component" value="Chromosome"/>
</dbReference>
<dbReference type="GO" id="GO:0005737">
    <property type="term" value="C:cytoplasm"/>
    <property type="evidence" value="ECO:0007669"/>
    <property type="project" value="UniProtKB-SubCell"/>
</dbReference>
<dbReference type="GO" id="GO:0004017">
    <property type="term" value="F:adenylate kinase activity"/>
    <property type="evidence" value="ECO:0007669"/>
    <property type="project" value="UniProtKB-UniRule"/>
</dbReference>
<dbReference type="GO" id="GO:0005524">
    <property type="term" value="F:ATP binding"/>
    <property type="evidence" value="ECO:0007669"/>
    <property type="project" value="UniProtKB-UniRule"/>
</dbReference>
<dbReference type="GO" id="GO:0044209">
    <property type="term" value="P:AMP salvage"/>
    <property type="evidence" value="ECO:0007669"/>
    <property type="project" value="UniProtKB-UniRule"/>
</dbReference>
<dbReference type="CDD" id="cd01428">
    <property type="entry name" value="ADK"/>
    <property type="match status" value="1"/>
</dbReference>
<dbReference type="Gene3D" id="3.40.50.300">
    <property type="entry name" value="P-loop containing nucleotide triphosphate hydrolases"/>
    <property type="match status" value="1"/>
</dbReference>
<dbReference type="HAMAP" id="MF_00235">
    <property type="entry name" value="Adenylate_kinase_Adk"/>
    <property type="match status" value="1"/>
</dbReference>
<dbReference type="InterPro" id="IPR006259">
    <property type="entry name" value="Adenyl_kin_sub"/>
</dbReference>
<dbReference type="InterPro" id="IPR000850">
    <property type="entry name" value="Adenylat/UMP-CMP_kin"/>
</dbReference>
<dbReference type="InterPro" id="IPR033690">
    <property type="entry name" value="Adenylat_kinase_CS"/>
</dbReference>
<dbReference type="InterPro" id="IPR027417">
    <property type="entry name" value="P-loop_NTPase"/>
</dbReference>
<dbReference type="NCBIfam" id="TIGR01351">
    <property type="entry name" value="adk"/>
    <property type="match status" value="1"/>
</dbReference>
<dbReference type="PANTHER" id="PTHR23359">
    <property type="entry name" value="NUCLEOTIDE KINASE"/>
    <property type="match status" value="1"/>
</dbReference>
<dbReference type="Pfam" id="PF00406">
    <property type="entry name" value="ADK"/>
    <property type="match status" value="1"/>
</dbReference>
<dbReference type="PRINTS" id="PR00094">
    <property type="entry name" value="ADENYLTKNASE"/>
</dbReference>
<dbReference type="SUPFAM" id="SSF52540">
    <property type="entry name" value="P-loop containing nucleoside triphosphate hydrolases"/>
    <property type="match status" value="1"/>
</dbReference>
<dbReference type="PROSITE" id="PS00113">
    <property type="entry name" value="ADENYLATE_KINASE"/>
    <property type="match status" value="1"/>
</dbReference>
<sequence>MRIILIGSPGSGKGTQAKIMSKKYNLPHISCGDILRKQNKCCDINKLIKKGELINDKLVTNIVLEKLKNINLFKGFILDGFPRTLYQANSIKENKIKIDYVLELFLQEKYIYERVLGRIIDKVSGEIYHLKFNPPKFITEKSNKNKILVRRLDDKKSALQKRINDFFKNSCLISEFYKKESLEKKLKYKIINADFDINTISNKIFNIINV</sequence>
<gene>
    <name evidence="1" type="primary">adk</name>
    <name type="ordered locus">WIGBR5280</name>
</gene>
<comment type="function">
    <text evidence="1">Catalyzes the reversible transfer of the terminal phosphate group between ATP and AMP. Plays an important role in cellular energy homeostasis and in adenine nucleotide metabolism.</text>
</comment>
<comment type="catalytic activity">
    <reaction evidence="1">
        <text>AMP + ATP = 2 ADP</text>
        <dbReference type="Rhea" id="RHEA:12973"/>
        <dbReference type="ChEBI" id="CHEBI:30616"/>
        <dbReference type="ChEBI" id="CHEBI:456215"/>
        <dbReference type="ChEBI" id="CHEBI:456216"/>
        <dbReference type="EC" id="2.7.4.3"/>
    </reaction>
</comment>
<comment type="pathway">
    <text evidence="1">Purine metabolism; AMP biosynthesis via salvage pathway; AMP from ADP: step 1/1.</text>
</comment>
<comment type="subunit">
    <text evidence="1">Monomer.</text>
</comment>
<comment type="subcellular location">
    <subcellularLocation>
        <location evidence="1">Cytoplasm</location>
    </subcellularLocation>
</comment>
<comment type="domain">
    <text evidence="1">Consists of three domains, a large central CORE domain and two small peripheral domains, NMPbind and LID, which undergo movements during catalysis. The LID domain closes over the site of phosphoryl transfer upon ATP binding. Assembling and dissambling the active center during each catalytic cycle provides an effective means to prevent ATP hydrolysis.</text>
</comment>
<comment type="similarity">
    <text evidence="1">Belongs to the adenylate kinase family.</text>
</comment>
<keyword id="KW-0067">ATP-binding</keyword>
<keyword id="KW-0963">Cytoplasm</keyword>
<keyword id="KW-0418">Kinase</keyword>
<keyword id="KW-0545">Nucleotide biosynthesis</keyword>
<keyword id="KW-0547">Nucleotide-binding</keyword>
<keyword id="KW-1185">Reference proteome</keyword>
<keyword id="KW-0808">Transferase</keyword>
<evidence type="ECO:0000255" key="1">
    <source>
        <dbReference type="HAMAP-Rule" id="MF_00235"/>
    </source>
</evidence>
<protein>
    <recommendedName>
        <fullName evidence="1">Adenylate kinase</fullName>
        <shortName evidence="1">AK</shortName>
        <ecNumber evidence="1">2.7.4.3</ecNumber>
    </recommendedName>
    <alternativeName>
        <fullName evidence="1">ATP-AMP transphosphorylase</fullName>
    </alternativeName>
    <alternativeName>
        <fullName evidence="1">ATP:AMP phosphotransferase</fullName>
    </alternativeName>
    <alternativeName>
        <fullName evidence="1">Adenylate monophosphate kinase</fullName>
    </alternativeName>
</protein>